<gene>
    <name type="primary">HOM3</name>
    <name type="ordered locus">YER052C</name>
</gene>
<feature type="chain" id="PRO_0000066690" description="Aspartokinase">
    <location>
        <begin position="1"/>
        <end position="527"/>
    </location>
</feature>
<feature type="domain" description="ACT" evidence="1">
    <location>
        <begin position="442"/>
        <end position="527"/>
    </location>
</feature>
<feature type="modified residue" description="Phosphothreonine" evidence="12">
    <location>
        <position position="333"/>
    </location>
</feature>
<feature type="mutagenesis site" description="Reduces kcat." evidence="4">
    <original>K</original>
    <variation>R</variation>
    <variation>A</variation>
    <variation>Q</variation>
    <location>
        <position position="18"/>
    </location>
</feature>
<feature type="mutagenesis site" description="Decreases affinity for aspartate and ATP." evidence="2">
    <original>G</original>
    <variation>D</variation>
    <location>
        <position position="25"/>
    </location>
</feature>
<feature type="mutagenesis site" description="Decreases affinity for aspartate and ATP." evidence="2">
    <original>K</original>
    <variation>I</variation>
    <location>
        <position position="26"/>
    </location>
</feature>
<feature type="mutagenesis site" description="Reduces kcat." evidence="4">
    <original>E</original>
    <variation>A</variation>
    <location>
        <position position="254"/>
    </location>
</feature>
<feature type="mutagenesis site" description="Reduces kcat and affects inhibition by threonine." evidence="4">
    <original>E</original>
    <variation>A</variation>
    <location>
        <position position="279"/>
    </location>
</feature>
<feature type="mutagenesis site" description="Reduces kcat." evidence="4">
    <original>H</original>
    <variation>A</variation>
    <location>
        <position position="292"/>
    </location>
</feature>
<feature type="mutagenesis site" description="Decreases enzyme stability." evidence="2">
    <original>A</original>
    <variation>T</variation>
    <location>
        <position position="406"/>
    </location>
</feature>
<feature type="mutagenesis site" description="Reduces kcat." evidence="4">
    <original>R</original>
    <variation>A</variation>
    <location>
        <position position="419"/>
    </location>
</feature>
<feature type="mutagenesis site" description="Disrupts threonine binding." evidence="5">
    <original>G</original>
    <variation>D</variation>
    <location>
        <position position="452"/>
    </location>
</feature>
<feature type="mutagenesis site" description="Reduces kcat." evidence="4">
    <original>H</original>
    <variation>A</variation>
    <location>
        <position position="497"/>
    </location>
</feature>
<organism>
    <name type="scientific">Saccharomyces cerevisiae (strain ATCC 204508 / S288c)</name>
    <name type="common">Baker's yeast</name>
    <dbReference type="NCBI Taxonomy" id="559292"/>
    <lineage>
        <taxon>Eukaryota</taxon>
        <taxon>Fungi</taxon>
        <taxon>Dikarya</taxon>
        <taxon>Ascomycota</taxon>
        <taxon>Saccharomycotina</taxon>
        <taxon>Saccharomycetes</taxon>
        <taxon>Saccharomycetales</taxon>
        <taxon>Saccharomycetaceae</taxon>
        <taxon>Saccharomyces</taxon>
    </lineage>
</organism>
<sequence length="527" mass="58110">MPMDFQPTSSHSNWVVQKFGGTSVGKFPVQIVDDIVKHYSKPDGPNNNVAVVCSARSSYTKAEGTTSRLLKCCDLASQESEFQDIIEVIRQDHIDNADRFILNPALQAKLVDDTNKELELVKKYLNASKVLGEVSSRTVDLVMSCGEKLSCLFMTALCNDRGCKAKYVDLSHIVPSDFSASALDNSFYTFLVQALKEKLAPFVSAKERIVPVFTGFFGLVPTGLLNGVGRGYTDLCAALIAVAVNADELQVWKEVDGIFTADPRKVPEARLLDSVTPEEASELTYYGSEVIHPFTMEQVIRAKIPIRIKNVQNPLGNGTIIYPDNVAKKGESTPPHPPENLSSSFYEKRKRGATAITTKNDIFVINIHSNKKTLSHGFLAQIFTILDKYKLVVDLISTSEVHVSMALPIPDADSLKSLRQAEEKLRILGSVDITKKLSIVSLVGKHMKQYIGIAGTMFTTLAEEGINIEMISQGANEINISCVINESDSIKALQCIHAKLLSERTNTSNQFEHAIDERLEQLKRLGI</sequence>
<protein>
    <recommendedName>
        <fullName>Aspartokinase</fullName>
        <ecNumber evidence="2 4 5 8">2.7.2.4</ecNumber>
    </recommendedName>
    <alternativeName>
        <fullName>Aspartate kinase</fullName>
    </alternativeName>
</protein>
<comment type="function">
    <text evidence="2 4 5 8">Phosphorylates aspartate, the first step in the biosynthesis of amino acids that derive from aspartate (the aspartate family of amino acids), including methioinine and threonine, the latter of which is a precursor to isoleucine.</text>
</comment>
<comment type="catalytic activity">
    <reaction evidence="2 4 5 8">
        <text>L-aspartate + ATP = 4-phospho-L-aspartate + ADP</text>
        <dbReference type="Rhea" id="RHEA:23776"/>
        <dbReference type="ChEBI" id="CHEBI:29991"/>
        <dbReference type="ChEBI" id="CHEBI:30616"/>
        <dbReference type="ChEBI" id="CHEBI:57535"/>
        <dbReference type="ChEBI" id="CHEBI:456216"/>
        <dbReference type="EC" id="2.7.2.4"/>
    </reaction>
    <physiologicalReaction direction="left-to-right" evidence="2 4 5 8">
        <dbReference type="Rhea" id="RHEA:23777"/>
    </physiologicalReaction>
</comment>
<comment type="activity regulation">
    <text evidence="2 4 5">Allosterically inhibited by threonine.</text>
</comment>
<comment type="biophysicochemical properties">
    <kinetics>
        <KM evidence="2">1.7 mM for aspartate (at 30 degrees Celsius)</KM>
        <KM evidence="4">4.59 mM for aspartate (at 30 degrees Celsius and at pH 7.5)</KM>
        <KM evidence="5">1.1 mM for aspartate (at 30 degrees Celsius and at pH 7.5)</KM>
        <KM evidence="2">5.4 mM for ATP (at 30 degrees Celsius)</KM>
        <KM evidence="4">0.74 mM for ATP (at 30 degrees Celsius and at pH 7.5)</KM>
        <KM evidence="5">0.8 mM for ATP (at 30 degrees Celsius and at pH 7.5)</KM>
        <text evidence="4 5">kcat is 46.6 sec(-1) for aspartate (PubMed:14623312). kcat is 49.3 sec(-1) for ATP (PubMed:14623312). kcat is 228 sec(-1) for aspartate and ATP (PubMed:15358146).</text>
    </kinetics>
</comment>
<comment type="pathway">
    <text evidence="2 4 5 8">Amino-acid biosynthesis; L-methionine biosynthesis via de novo pathway; L-homoserine from L-aspartate: step 1/3.</text>
</comment>
<comment type="pathway">
    <text evidence="2 4 5 8">Amino-acid biosynthesis; L-threonine biosynthesis; L-threonine from L-aspartate: step 1/5.</text>
</comment>
<comment type="subunit">
    <text evidence="5 8">Homohexamer (PubMed:15358146). Interacts with FPR1; the interaction is direct, plays a role in feedback inhibition of aspartokinase by threonine, and inhibited by tacrolimus and sirolimus (PubMed:9315655).</text>
</comment>
<comment type="interaction">
    <interactant intactId="EBI-2430">
        <id>P10869</id>
    </interactant>
    <interactant intactId="EBI-6961">
        <id>P20081</id>
        <label>FPR1</label>
    </interactant>
    <organismsDiffer>false</organismsDiffer>
    <experiments>4</experiments>
</comment>
<comment type="disruption phenotype">
    <text evidence="6 7 8">Inviable on medium lacking methionine and threonine (PubMed:9315655). Sensitive to amitrole (a compound that increases flux through the threonine biosynthetic pathway) (PubMed:20305002). Decreases survival time in an in vivo model of infection (PubMed:20305003).</text>
</comment>
<comment type="miscellaneous">
    <text evidence="3">Present with 48100 molecules/cell in log phase SD medium.</text>
</comment>
<comment type="similarity">
    <text evidence="11">Belongs to the aspartokinase family.</text>
</comment>
<evidence type="ECO:0000255" key="1">
    <source>
        <dbReference type="PROSITE-ProRule" id="PRU01007"/>
    </source>
</evidence>
<evidence type="ECO:0000269" key="2">
    <source>
    </source>
</evidence>
<evidence type="ECO:0000269" key="3">
    <source>
    </source>
</evidence>
<evidence type="ECO:0000269" key="4">
    <source>
    </source>
</evidence>
<evidence type="ECO:0000269" key="5">
    <source>
    </source>
</evidence>
<evidence type="ECO:0000269" key="6">
    <source>
    </source>
</evidence>
<evidence type="ECO:0000269" key="7">
    <source>
    </source>
</evidence>
<evidence type="ECO:0000269" key="8">
    <source>
    </source>
</evidence>
<evidence type="ECO:0000303" key="9">
    <source>
    </source>
</evidence>
<evidence type="ECO:0000303" key="10">
    <source>
    </source>
</evidence>
<evidence type="ECO:0000305" key="11"/>
<evidence type="ECO:0007744" key="12">
    <source>
    </source>
</evidence>
<dbReference type="EC" id="2.7.2.4" evidence="2 4 5 8"/>
<dbReference type="EMBL" id="J03526">
    <property type="protein sequence ID" value="AAA34681.1"/>
    <property type="molecule type" value="Genomic_DNA"/>
</dbReference>
<dbReference type="EMBL" id="U18796">
    <property type="protein sequence ID" value="AAB64587.1"/>
    <property type="molecule type" value="Genomic_DNA"/>
</dbReference>
<dbReference type="EMBL" id="BK006939">
    <property type="protein sequence ID" value="DAA07708.1"/>
    <property type="molecule type" value="Genomic_DNA"/>
</dbReference>
<dbReference type="PIR" id="A35888">
    <property type="entry name" value="KIBYD"/>
</dbReference>
<dbReference type="RefSeq" id="NP_010972.1">
    <property type="nucleotide sequence ID" value="NM_001178943.1"/>
</dbReference>
<dbReference type="SMR" id="P10869"/>
<dbReference type="BioGRID" id="36791">
    <property type="interactions" value="313"/>
</dbReference>
<dbReference type="DIP" id="DIP-1319N"/>
<dbReference type="FunCoup" id="P10869">
    <property type="interactions" value="420"/>
</dbReference>
<dbReference type="IntAct" id="P10869">
    <property type="interactions" value="18"/>
</dbReference>
<dbReference type="MINT" id="P10869"/>
<dbReference type="STRING" id="4932.YER052C"/>
<dbReference type="iPTMnet" id="P10869"/>
<dbReference type="PaxDb" id="4932-YER052C"/>
<dbReference type="PeptideAtlas" id="P10869"/>
<dbReference type="EnsemblFungi" id="YER052C_mRNA">
    <property type="protein sequence ID" value="YER052C"/>
    <property type="gene ID" value="YER052C"/>
</dbReference>
<dbReference type="GeneID" id="856778"/>
<dbReference type="KEGG" id="sce:YER052C"/>
<dbReference type="AGR" id="SGD:S000000854"/>
<dbReference type="SGD" id="S000000854">
    <property type="gene designation" value="HOM3"/>
</dbReference>
<dbReference type="VEuPathDB" id="FungiDB:YER052C"/>
<dbReference type="eggNOG" id="KOG0456">
    <property type="taxonomic scope" value="Eukaryota"/>
</dbReference>
<dbReference type="GeneTree" id="ENSGT00940000176517"/>
<dbReference type="HOGENOM" id="CLU_009116_6_4_1"/>
<dbReference type="InParanoid" id="P10869"/>
<dbReference type="OMA" id="DNINIMM"/>
<dbReference type="OrthoDB" id="4323675at2759"/>
<dbReference type="BioCyc" id="YEAST:YER052C-MONOMER"/>
<dbReference type="BRENDA" id="2.7.2.4">
    <property type="organism ID" value="984"/>
</dbReference>
<dbReference type="SABIO-RK" id="P10869"/>
<dbReference type="UniPathway" id="UPA00050">
    <property type="reaction ID" value="UER00461"/>
</dbReference>
<dbReference type="UniPathway" id="UPA00051">
    <property type="reaction ID" value="UER00462"/>
</dbReference>
<dbReference type="BioGRID-ORCS" id="856778">
    <property type="hits" value="9 hits in 10 CRISPR screens"/>
</dbReference>
<dbReference type="PRO" id="PR:P10869"/>
<dbReference type="Proteomes" id="UP000002311">
    <property type="component" value="Chromosome V"/>
</dbReference>
<dbReference type="RNAct" id="P10869">
    <property type="molecule type" value="protein"/>
</dbReference>
<dbReference type="GO" id="GO:0005737">
    <property type="term" value="C:cytoplasm"/>
    <property type="evidence" value="ECO:0007005"/>
    <property type="project" value="SGD"/>
</dbReference>
<dbReference type="GO" id="GO:0005829">
    <property type="term" value="C:cytosol"/>
    <property type="evidence" value="ECO:0000318"/>
    <property type="project" value="GO_Central"/>
</dbReference>
<dbReference type="GO" id="GO:0004072">
    <property type="term" value="F:aspartate kinase activity"/>
    <property type="evidence" value="ECO:0000314"/>
    <property type="project" value="SGD"/>
</dbReference>
<dbReference type="GO" id="GO:0005524">
    <property type="term" value="F:ATP binding"/>
    <property type="evidence" value="ECO:0007669"/>
    <property type="project" value="UniProtKB-KW"/>
</dbReference>
<dbReference type="GO" id="GO:0071266">
    <property type="term" value="P:'de novo' L-methionine biosynthetic process"/>
    <property type="evidence" value="ECO:0000315"/>
    <property type="project" value="UniProtKB"/>
</dbReference>
<dbReference type="GO" id="GO:0009090">
    <property type="term" value="P:homoserine biosynthetic process"/>
    <property type="evidence" value="ECO:0000315"/>
    <property type="project" value="SGD"/>
</dbReference>
<dbReference type="GO" id="GO:0009089">
    <property type="term" value="P:lysine biosynthetic process via diaminopimelate"/>
    <property type="evidence" value="ECO:0007669"/>
    <property type="project" value="UniProtKB-UniPathway"/>
</dbReference>
<dbReference type="GO" id="GO:0009086">
    <property type="term" value="P:methionine biosynthetic process"/>
    <property type="evidence" value="ECO:0000315"/>
    <property type="project" value="SGD"/>
</dbReference>
<dbReference type="GO" id="GO:0009088">
    <property type="term" value="P:threonine biosynthetic process"/>
    <property type="evidence" value="ECO:0000314"/>
    <property type="project" value="SGD"/>
</dbReference>
<dbReference type="CDD" id="cd04247">
    <property type="entry name" value="AAK_AK-Hom3"/>
    <property type="match status" value="1"/>
</dbReference>
<dbReference type="CDD" id="cd04934">
    <property type="entry name" value="ACT_AK-Hom3_1"/>
    <property type="match status" value="1"/>
</dbReference>
<dbReference type="CDD" id="cd04919">
    <property type="entry name" value="ACT_AK-Hom3_2"/>
    <property type="match status" value="1"/>
</dbReference>
<dbReference type="FunFam" id="3.30.2130.10:FF:000001">
    <property type="entry name" value="Bifunctional aspartokinase/homoserine dehydrogenase"/>
    <property type="match status" value="1"/>
</dbReference>
<dbReference type="FunFam" id="3.40.1160.10:FF:000023">
    <property type="entry name" value="Probable aspartokinase"/>
    <property type="match status" value="1"/>
</dbReference>
<dbReference type="Gene3D" id="3.40.1160.10">
    <property type="entry name" value="Acetylglutamate kinase-like"/>
    <property type="match status" value="1"/>
</dbReference>
<dbReference type="Gene3D" id="3.30.2130.10">
    <property type="entry name" value="VC0802-like"/>
    <property type="match status" value="1"/>
</dbReference>
<dbReference type="InterPro" id="IPR036393">
    <property type="entry name" value="AceGlu_kinase-like_sf"/>
</dbReference>
<dbReference type="InterPro" id="IPR045865">
    <property type="entry name" value="ACT-like_dom_sf"/>
</dbReference>
<dbReference type="InterPro" id="IPR054352">
    <property type="entry name" value="ACT_Aspartokinase"/>
</dbReference>
<dbReference type="InterPro" id="IPR002912">
    <property type="entry name" value="ACT_dom"/>
</dbReference>
<dbReference type="InterPro" id="IPR041747">
    <property type="entry name" value="AK-Hom3"/>
</dbReference>
<dbReference type="InterPro" id="IPR001048">
    <property type="entry name" value="Asp/Glu/Uridylate_kinase"/>
</dbReference>
<dbReference type="InterPro" id="IPR001341">
    <property type="entry name" value="Asp_kinase"/>
</dbReference>
<dbReference type="InterPro" id="IPR018042">
    <property type="entry name" value="Aspartate_kinase_CS"/>
</dbReference>
<dbReference type="NCBIfam" id="TIGR00657">
    <property type="entry name" value="asp_kinases"/>
    <property type="match status" value="1"/>
</dbReference>
<dbReference type="PANTHER" id="PTHR21499">
    <property type="entry name" value="ASPARTATE KINASE"/>
    <property type="match status" value="1"/>
</dbReference>
<dbReference type="PANTHER" id="PTHR21499:SF59">
    <property type="entry name" value="ASPARTOKINASE"/>
    <property type="match status" value="1"/>
</dbReference>
<dbReference type="Pfam" id="PF00696">
    <property type="entry name" value="AA_kinase"/>
    <property type="match status" value="1"/>
</dbReference>
<dbReference type="Pfam" id="PF22468">
    <property type="entry name" value="ACT_9"/>
    <property type="match status" value="1"/>
</dbReference>
<dbReference type="SUPFAM" id="SSF55021">
    <property type="entry name" value="ACT-like"/>
    <property type="match status" value="2"/>
</dbReference>
<dbReference type="SUPFAM" id="SSF53633">
    <property type="entry name" value="Carbamate kinase-like"/>
    <property type="match status" value="1"/>
</dbReference>
<dbReference type="PROSITE" id="PS51671">
    <property type="entry name" value="ACT"/>
    <property type="match status" value="1"/>
</dbReference>
<dbReference type="PROSITE" id="PS00324">
    <property type="entry name" value="ASPARTOKINASE"/>
    <property type="match status" value="1"/>
</dbReference>
<name>AK_YEAST</name>
<proteinExistence type="evidence at protein level"/>
<accession>P10869</accession>
<accession>D3DLV4</accession>
<keyword id="KW-0028">Amino-acid biosynthesis</keyword>
<keyword id="KW-0067">ATP-binding</keyword>
<keyword id="KW-0418">Kinase</keyword>
<keyword id="KW-0486">Methionine biosynthesis</keyword>
<keyword id="KW-0547">Nucleotide-binding</keyword>
<keyword id="KW-0597">Phosphoprotein</keyword>
<keyword id="KW-1185">Reference proteome</keyword>
<keyword id="KW-0677">Repeat</keyword>
<keyword id="KW-0791">Threonine biosynthesis</keyword>
<keyword id="KW-0808">Transferase</keyword>
<reference key="1">
    <citation type="journal article" date="1988" name="J. Biol. Chem.">
        <title>Structure of the yeast HOM3 gene which encodes aspartokinase.</title>
        <authorList>
            <person name="Rafalski J.A."/>
            <person name="Falco S.C."/>
        </authorList>
    </citation>
    <scope>NUCLEOTIDE SEQUENCE [GENOMIC DNA]</scope>
</reference>
<reference key="2">
    <citation type="journal article" date="1990" name="J. Biol. Chem.">
        <title>Structure of the yeast HOM3 gene which encodes aspartokinase.</title>
        <authorList>
            <person name="Rafalski J.A."/>
            <person name="Falco S.C."/>
        </authorList>
    </citation>
    <scope>SEQUENCE REVISION</scope>
</reference>
<reference key="3">
    <citation type="journal article" date="1997" name="Nature">
        <title>The nucleotide sequence of Saccharomyces cerevisiae chromosome V.</title>
        <authorList>
            <person name="Dietrich F.S."/>
            <person name="Mulligan J.T."/>
            <person name="Hennessy K.M."/>
            <person name="Yelton M.A."/>
            <person name="Allen E."/>
            <person name="Araujo R."/>
            <person name="Aviles E."/>
            <person name="Berno A."/>
            <person name="Brennan T."/>
            <person name="Carpenter J."/>
            <person name="Chen E."/>
            <person name="Cherry J.M."/>
            <person name="Chung E."/>
            <person name="Duncan M."/>
            <person name="Guzman E."/>
            <person name="Hartzell G."/>
            <person name="Hunicke-Smith S."/>
            <person name="Hyman R.W."/>
            <person name="Kayser A."/>
            <person name="Komp C."/>
            <person name="Lashkari D."/>
            <person name="Lew H."/>
            <person name="Lin D."/>
            <person name="Mosedale D."/>
            <person name="Nakahara K."/>
            <person name="Namath A."/>
            <person name="Norgren R."/>
            <person name="Oefner P."/>
            <person name="Oh C."/>
            <person name="Petel F.X."/>
            <person name="Roberts D."/>
            <person name="Sehl P."/>
            <person name="Schramm S."/>
            <person name="Shogren T."/>
            <person name="Smith V."/>
            <person name="Taylor P."/>
            <person name="Wei Y."/>
            <person name="Botstein D."/>
            <person name="Davis R.W."/>
        </authorList>
    </citation>
    <scope>NUCLEOTIDE SEQUENCE [LARGE SCALE GENOMIC DNA]</scope>
    <source>
        <strain>ATCC 204508 / S288c</strain>
    </source>
</reference>
<reference key="4">
    <citation type="journal article" date="2014" name="G3 (Bethesda)">
        <title>The reference genome sequence of Saccharomyces cerevisiae: Then and now.</title>
        <authorList>
            <person name="Engel S.R."/>
            <person name="Dietrich F.S."/>
            <person name="Fisk D.G."/>
            <person name="Binkley G."/>
            <person name="Balakrishnan R."/>
            <person name="Costanzo M.C."/>
            <person name="Dwight S.S."/>
            <person name="Hitz B.C."/>
            <person name="Karra K."/>
            <person name="Nash R.S."/>
            <person name="Weng S."/>
            <person name="Wong E.D."/>
            <person name="Lloyd P."/>
            <person name="Skrzypek M.S."/>
            <person name="Miyasato S.R."/>
            <person name="Simison M."/>
            <person name="Cherry J.M."/>
        </authorList>
    </citation>
    <scope>GENOME REANNOTATION</scope>
    <source>
        <strain>ATCC 204508 / S288c</strain>
    </source>
</reference>
<reference key="5">
    <citation type="journal article" date="1997" name="Mol. Cell. Biol.">
        <title>FKBP12 physically and functionally interacts with aspartokinase in Saccharomyces cerevisiae.</title>
        <authorList>
            <person name="Alarcon C.M."/>
            <person name="Heitman J."/>
        </authorList>
    </citation>
    <scope>FUNCTION</scope>
    <scope>CATALYTIC ACTIVITY</scope>
    <scope>PATHWAY</scope>
    <scope>INTERACTION WITH FPR1</scope>
    <scope>DISRUPTION PHENOTYPE</scope>
</reference>
<reference key="6">
    <citation type="journal article" date="1999" name="Yeast">
        <title>Mutations that cause threonine sensitivity identify catalytic and regulatory regions of the aspartate kinase of Saccharomyces cerevisiae.</title>
        <authorList>
            <person name="Arevalo-Rodriguez M."/>
            <person name="Calderon I.L."/>
            <person name="Holmberg S."/>
        </authorList>
    </citation>
    <scope>FUNCTION</scope>
    <scope>CATALYTIC ACTIVITY</scope>
    <scope>ACTIVITY REGULATION</scope>
    <scope>BIOPHYSICOCHEMICAL PROPERTIES</scope>
    <scope>PATHWAY</scope>
    <scope>MUTAGENESIS OF GLY-25; LYS-26 AND ALA-406</scope>
</reference>
<reference key="7">
    <citation type="journal article" date="2003" name="Biochem. Biophys. Res. Commun.">
        <title>Functionally important amino acids in Saccharomyces cerevisiae aspartate kinase.</title>
        <authorList>
            <person name="Bareich D.C."/>
            <person name="Wright G.D."/>
        </authorList>
    </citation>
    <scope>FUNCTION</scope>
    <scope>CATALYTIC ACTIVITY</scope>
    <scope>BIOPHYSICOCHEMICAL PROPERTIES</scope>
    <scope>ACTIVITY REGULATION</scope>
    <scope>PATHWAY</scope>
    <scope>MUTAGENESIS OF LYS-18; GLU-254; GLU-279; HIS-292; ARG-419 AND HIS-497</scope>
</reference>
<reference key="8">
    <citation type="journal article" date="2003" name="Nature">
        <title>Global analysis of protein expression in yeast.</title>
        <authorList>
            <person name="Ghaemmaghami S."/>
            <person name="Huh W.-K."/>
            <person name="Bower K."/>
            <person name="Howson R.W."/>
            <person name="Belle A."/>
            <person name="Dephoure N."/>
            <person name="O'Shea E.K."/>
            <person name="Weissman J.S."/>
        </authorList>
    </citation>
    <scope>LEVEL OF PROTEIN EXPRESSION [LARGE SCALE ANALYSIS]</scope>
</reference>
<reference key="9">
    <citation type="journal article" date="2004" name="Biochem. Biophys. Res. Commun.">
        <title>Characterization of the aspartate kinase from Saccharomyces cerevisiae and of its interaction with threonine.</title>
        <authorList>
            <person name="Marina P."/>
            <person name="Martinez-Costa O.H."/>
            <person name="Calderon I.L."/>
            <person name="Aragon J.J."/>
        </authorList>
    </citation>
    <scope>FUNCTION</scope>
    <scope>CATALYTIC ACTIVITY</scope>
    <scope>ACTIVITY REGULATION</scope>
    <scope>BIOPHYSICOCHEMICAL PROPERTIES</scope>
    <scope>PATHWAY</scope>
    <scope>SUBUNIT</scope>
    <scope>MUTAGENESIS OF GLY-452</scope>
</reference>
<reference key="10">
    <citation type="journal article" date="2007" name="J. Proteome Res.">
        <title>Large-scale phosphorylation analysis of alpha-factor-arrested Saccharomyces cerevisiae.</title>
        <authorList>
            <person name="Li X."/>
            <person name="Gerber S.A."/>
            <person name="Rudner A.D."/>
            <person name="Beausoleil S.A."/>
            <person name="Haas W."/>
            <person name="Villen J."/>
            <person name="Elias J.E."/>
            <person name="Gygi S.P."/>
        </authorList>
    </citation>
    <scope>PHOSPHORYLATION [LARGE SCALE ANALYSIS] AT THR-333</scope>
    <scope>IDENTIFICATION BY MASS SPECTROMETRY [LARGE SCALE ANALYSIS]</scope>
    <source>
        <strain>ADR376</strain>
    </source>
</reference>
<reference key="11">
    <citation type="journal article" date="2007" name="Proc. Natl. Acad. Sci. U.S.A.">
        <title>Analysis of phosphorylation sites on proteins from Saccharomyces cerevisiae by electron transfer dissociation (ETD) mass spectrometry.</title>
        <authorList>
            <person name="Chi A."/>
            <person name="Huttenhower C."/>
            <person name="Geer L.Y."/>
            <person name="Coon J.J."/>
            <person name="Syka J.E.P."/>
            <person name="Bai D.L."/>
            <person name="Shabanowitz J."/>
            <person name="Burke D.J."/>
            <person name="Troyanskaya O.G."/>
            <person name="Hunt D.F."/>
        </authorList>
    </citation>
    <scope>IDENTIFICATION BY MASS SPECTROMETRY [LARGE SCALE ANALYSIS]</scope>
</reference>
<reference key="12">
    <citation type="journal article" date="2008" name="Mol. Cell. Proteomics">
        <title>A multidimensional chromatography technology for in-depth phosphoproteome analysis.</title>
        <authorList>
            <person name="Albuquerque C.P."/>
            <person name="Smolka M.B."/>
            <person name="Payne S.H."/>
            <person name="Bafna V."/>
            <person name="Eng J."/>
            <person name="Zhou H."/>
        </authorList>
    </citation>
    <scope>IDENTIFICATION BY MASS SPECTROMETRY [LARGE SCALE ANALYSIS]</scope>
</reference>
<reference key="13">
    <citation type="journal article" date="2009" name="Science">
        <title>Global analysis of Cdk1 substrate phosphorylation sites provides insights into evolution.</title>
        <authorList>
            <person name="Holt L.J."/>
            <person name="Tuch B.B."/>
            <person name="Villen J."/>
            <person name="Johnson A.D."/>
            <person name="Gygi S.P."/>
            <person name="Morgan D.O."/>
        </authorList>
    </citation>
    <scope>IDENTIFICATION BY MASS SPECTROMETRY [LARGE SCALE ANALYSIS]</scope>
</reference>
<reference key="14">
    <citation type="journal article" date="2010" name="Eukaryot. Cell">
        <title>Homoserine toxicity in Saccharomyces cerevisiae and Candida albicans homoserine kinase (thr1Delta) mutants.</title>
        <authorList>
            <person name="Kingsbury J.M."/>
            <person name="McCusker J.H."/>
        </authorList>
    </citation>
    <scope>DISRUPTION PHENOTYPE</scope>
    <source>
        <strain evidence="9">YJM 145</strain>
    </source>
</reference>
<reference key="15">
    <citation type="journal article" date="2010" name="Eukaryot. Cell">
        <title>Fungal homoserine kinase (thr1Delta) mutants are attenuated in virulence and die rapidly upon threonine starvation and serum incubation.</title>
        <authorList>
            <person name="Kingsbury J.M."/>
            <person name="McCusker J.H."/>
        </authorList>
    </citation>
    <scope>DISRUPTION PHENOTYPE</scope>
    <source>
        <strain evidence="10">YJM 145</strain>
    </source>
</reference>